<feature type="chain" id="PRO_0000068678" description="Serine acetyltransferase">
    <location>
        <begin position="1"/>
        <end position="213"/>
    </location>
</feature>
<gene>
    <name type="primary">cysE</name>
    <name type="ordered locus">SAV0529</name>
</gene>
<proteinExistence type="inferred from homology"/>
<sequence length="213" mass="23528">MLKRMRDDIKMVFEQDPAARSTLEVITTYAGLHAVWSHLIAHKLYNQKKYVAARAISQISRFFTGIEIHPGAKIGKRLFIDHGMGVVIGETCTIGDNVTIYQGVTLGGTGKERGKRHPDIGDNVLIAAGAKVLGNIKINSNVNIGANSVVLQSVPSYSTVVGIPGHIVKQDGVRVGKTFDHRHLPDPIYEQIKHLERQLEKTRNGEIQDDYII</sequence>
<protein>
    <recommendedName>
        <fullName>Serine acetyltransferase</fullName>
        <shortName>SAT</shortName>
        <ecNumber>2.3.1.30</ecNumber>
    </recommendedName>
</protein>
<reference key="1">
    <citation type="journal article" date="2001" name="Lancet">
        <title>Whole genome sequencing of meticillin-resistant Staphylococcus aureus.</title>
        <authorList>
            <person name="Kuroda M."/>
            <person name="Ohta T."/>
            <person name="Uchiyama I."/>
            <person name="Baba T."/>
            <person name="Yuzawa H."/>
            <person name="Kobayashi I."/>
            <person name="Cui L."/>
            <person name="Oguchi A."/>
            <person name="Aoki K."/>
            <person name="Nagai Y."/>
            <person name="Lian J.-Q."/>
            <person name="Ito T."/>
            <person name="Kanamori M."/>
            <person name="Matsumaru H."/>
            <person name="Maruyama A."/>
            <person name="Murakami H."/>
            <person name="Hosoyama A."/>
            <person name="Mizutani-Ui Y."/>
            <person name="Takahashi N.K."/>
            <person name="Sawano T."/>
            <person name="Inoue R."/>
            <person name="Kaito C."/>
            <person name="Sekimizu K."/>
            <person name="Hirakawa H."/>
            <person name="Kuhara S."/>
            <person name="Goto S."/>
            <person name="Yabuzaki J."/>
            <person name="Kanehisa M."/>
            <person name="Yamashita A."/>
            <person name="Oshima K."/>
            <person name="Furuya K."/>
            <person name="Yoshino C."/>
            <person name="Shiba T."/>
            <person name="Hattori M."/>
            <person name="Ogasawara N."/>
            <person name="Hayashi H."/>
            <person name="Hiramatsu K."/>
        </authorList>
    </citation>
    <scope>NUCLEOTIDE SEQUENCE [LARGE SCALE GENOMIC DNA]</scope>
    <source>
        <strain>Mu50 / ATCC 700699</strain>
    </source>
</reference>
<evidence type="ECO:0000305" key="1"/>
<accession>P67764</accession>
<accession>Q99W74</accession>
<keyword id="KW-0012">Acyltransferase</keyword>
<keyword id="KW-0028">Amino-acid biosynthesis</keyword>
<keyword id="KW-0198">Cysteine biosynthesis</keyword>
<keyword id="KW-0963">Cytoplasm</keyword>
<keyword id="KW-0677">Repeat</keyword>
<keyword id="KW-0808">Transferase</keyword>
<organism>
    <name type="scientific">Staphylococcus aureus (strain Mu50 / ATCC 700699)</name>
    <dbReference type="NCBI Taxonomy" id="158878"/>
    <lineage>
        <taxon>Bacteria</taxon>
        <taxon>Bacillati</taxon>
        <taxon>Bacillota</taxon>
        <taxon>Bacilli</taxon>
        <taxon>Bacillales</taxon>
        <taxon>Staphylococcaceae</taxon>
        <taxon>Staphylococcus</taxon>
    </lineage>
</organism>
<dbReference type="EC" id="2.3.1.30"/>
<dbReference type="EMBL" id="BA000017">
    <property type="protein sequence ID" value="BAB56691.1"/>
    <property type="molecule type" value="Genomic_DNA"/>
</dbReference>
<dbReference type="SMR" id="P67764"/>
<dbReference type="KEGG" id="sav:SAV0529"/>
<dbReference type="HOGENOM" id="CLU_051638_10_0_9"/>
<dbReference type="PhylomeDB" id="P67764"/>
<dbReference type="UniPathway" id="UPA00136">
    <property type="reaction ID" value="UER00199"/>
</dbReference>
<dbReference type="Proteomes" id="UP000002481">
    <property type="component" value="Chromosome"/>
</dbReference>
<dbReference type="GO" id="GO:0005737">
    <property type="term" value="C:cytoplasm"/>
    <property type="evidence" value="ECO:0007669"/>
    <property type="project" value="UniProtKB-SubCell"/>
</dbReference>
<dbReference type="GO" id="GO:0009001">
    <property type="term" value="F:serine O-acetyltransferase activity"/>
    <property type="evidence" value="ECO:0007669"/>
    <property type="project" value="UniProtKB-EC"/>
</dbReference>
<dbReference type="GO" id="GO:0006535">
    <property type="term" value="P:cysteine biosynthetic process from serine"/>
    <property type="evidence" value="ECO:0007669"/>
    <property type="project" value="InterPro"/>
</dbReference>
<dbReference type="CDD" id="cd03354">
    <property type="entry name" value="LbH_SAT"/>
    <property type="match status" value="1"/>
</dbReference>
<dbReference type="FunFam" id="1.10.3130.10:FF:000002">
    <property type="entry name" value="Serine acetyltransferase"/>
    <property type="match status" value="1"/>
</dbReference>
<dbReference type="FunFam" id="2.160.10.10:FF:000007">
    <property type="entry name" value="Serine acetyltransferase"/>
    <property type="match status" value="1"/>
</dbReference>
<dbReference type="Gene3D" id="2.160.10.10">
    <property type="entry name" value="Hexapeptide repeat proteins"/>
    <property type="match status" value="1"/>
</dbReference>
<dbReference type="Gene3D" id="1.10.3130.10">
    <property type="entry name" value="serine acetyltransferase, domain 1"/>
    <property type="match status" value="1"/>
</dbReference>
<dbReference type="InterPro" id="IPR001451">
    <property type="entry name" value="Hexapep"/>
</dbReference>
<dbReference type="InterPro" id="IPR045304">
    <property type="entry name" value="LbH_SAT"/>
</dbReference>
<dbReference type="InterPro" id="IPR042122">
    <property type="entry name" value="Ser_AcTrfase_N_sf"/>
</dbReference>
<dbReference type="InterPro" id="IPR005881">
    <property type="entry name" value="Ser_O-AcTrfase"/>
</dbReference>
<dbReference type="InterPro" id="IPR053376">
    <property type="entry name" value="Serine_acetyltransferase"/>
</dbReference>
<dbReference type="InterPro" id="IPR011004">
    <property type="entry name" value="Trimer_LpxA-like_sf"/>
</dbReference>
<dbReference type="NCBIfam" id="TIGR01172">
    <property type="entry name" value="cysE"/>
    <property type="match status" value="1"/>
</dbReference>
<dbReference type="NCBIfam" id="NF041874">
    <property type="entry name" value="EPS_EpsC"/>
    <property type="match status" value="1"/>
</dbReference>
<dbReference type="PANTHER" id="PTHR42811">
    <property type="entry name" value="SERINE ACETYLTRANSFERASE"/>
    <property type="match status" value="1"/>
</dbReference>
<dbReference type="Pfam" id="PF00132">
    <property type="entry name" value="Hexapep"/>
    <property type="match status" value="1"/>
</dbReference>
<dbReference type="PIRSF" id="PIRSF000441">
    <property type="entry name" value="CysE"/>
    <property type="match status" value="1"/>
</dbReference>
<dbReference type="SUPFAM" id="SSF51161">
    <property type="entry name" value="Trimeric LpxA-like enzymes"/>
    <property type="match status" value="1"/>
</dbReference>
<name>CYSE_STAAM</name>
<comment type="catalytic activity">
    <reaction>
        <text>L-serine + acetyl-CoA = O-acetyl-L-serine + CoA</text>
        <dbReference type="Rhea" id="RHEA:24560"/>
        <dbReference type="ChEBI" id="CHEBI:33384"/>
        <dbReference type="ChEBI" id="CHEBI:57287"/>
        <dbReference type="ChEBI" id="CHEBI:57288"/>
        <dbReference type="ChEBI" id="CHEBI:58340"/>
        <dbReference type="EC" id="2.3.1.30"/>
    </reaction>
</comment>
<comment type="pathway">
    <text>Amino-acid biosynthesis; L-cysteine biosynthesis; L-cysteine from L-serine: step 1/2.</text>
</comment>
<comment type="subcellular location">
    <subcellularLocation>
        <location>Cytoplasm</location>
    </subcellularLocation>
</comment>
<comment type="similarity">
    <text evidence="1">Belongs to the transferase hexapeptide repeat family.</text>
</comment>